<organism>
    <name type="scientific">Hypoxylon pulicicidum</name>
    <dbReference type="NCBI Taxonomy" id="1243767"/>
    <lineage>
        <taxon>Eukaryota</taxon>
        <taxon>Fungi</taxon>
        <taxon>Dikarya</taxon>
        <taxon>Ascomycota</taxon>
        <taxon>Pezizomycotina</taxon>
        <taxon>Sordariomycetes</taxon>
        <taxon>Xylariomycetidae</taxon>
        <taxon>Xylariales</taxon>
        <taxon>Hypoxylaceae</taxon>
        <taxon>Hypoxylon</taxon>
    </lineage>
</organism>
<comment type="function">
    <text evidence="3 6">Cytochrome P450 monooxygenase; part of the gene cluster that mediates the biosynthesis of the indole diterpenes nodulisporic acids (NA). Nodulisporic acid A (NAA) and its chemically modified derivatives are of particular significance because of their highly potent insecticidal activity against blood-feeding arthropods and lack of observable adverse effects on mammals, in particular the tremogenicity associated with the paspaline-derived IDTs is not observed (PubMed:29283570). The geranylgeranyl diphosphate (GGPP) synthase ggs1, localized outside of the cluster, is proposed to catalyze the first step in nodulisporic acid biosynthesis via conversion of farnesyl pyrophosphate and isopentyl pyrophosphate into geranylgeranyl pyrophosphate (GGPP) (PubMed:29283570). Condensation of indole-3-glycerol phosphate with GGPP by the prenyl transferase nodC then forms 3-geranylgeranylindole (3-GGI) (PubMed:29283570). Epoxidation by the FAD-dependent monooxygenase nodM leads to a single-epoxidized-GGI that is substrate of the terpene cyclase nodB for cyclization to yield emindole SB (PubMed:29283570). The terminal methyl carbon, C28, of emindole SB is then oxidized by the cytochrome P450 monooxygenase nodW to produce nodulisporic acid F (NAF), the pentacyclic core of NAA (PubMed:29283570). NAF is converted to nodulisporic acid E (NAE) via prenylation. This step is probably performed by one of the indole diterpene prenyltransferases nodD1 or nodD2 (Probable). Several oxidation steps performed by the FAD-linked oxidoreductase nodO and one of the cytochrome P450 monooxygenase nodR, nodX or nodZ further convert NAE to nodulisporic acid D (NAD) (Probable). NAD is substrate of cytochrome P450 monooxygenase nodJ to produce the precursor of nodulisporic acid C (NAC), converted to NAC by one of the indole diterpene prenyltransferases nodD1 or nodD2 (Probable). The FAD-dependent monooxygenase nodY2 then oxidizes NAC to nodulisporic acid B (NAB) (Probable). Finally NAB is converted to NAA by one of the cytochrome P450 monooxygenases nodR, nodX or nodZ (Probable).</text>
</comment>
<comment type="cofactor">
    <cofactor evidence="1">
        <name>heme</name>
        <dbReference type="ChEBI" id="CHEBI:30413"/>
    </cofactor>
</comment>
<comment type="pathway">
    <text evidence="6">Secondary metabolite biosynthesis.</text>
</comment>
<comment type="subcellular location">
    <subcellularLocation>
        <location evidence="2">Membrane</location>
        <topology evidence="2">Multi-pass membrane protein</topology>
    </subcellularLocation>
</comment>
<comment type="similarity">
    <text evidence="5">Belongs to the cytochrome P450 family.</text>
</comment>
<gene>
    <name evidence="4" type="primary">nodW</name>
</gene>
<evidence type="ECO:0000250" key="1">
    <source>
        <dbReference type="UniProtKB" id="P04798"/>
    </source>
</evidence>
<evidence type="ECO:0000255" key="2"/>
<evidence type="ECO:0000269" key="3">
    <source>
    </source>
</evidence>
<evidence type="ECO:0000303" key="4">
    <source>
    </source>
</evidence>
<evidence type="ECO:0000305" key="5"/>
<evidence type="ECO:0000305" key="6">
    <source>
    </source>
</evidence>
<dbReference type="EC" id="1.-.-.-" evidence="6"/>
<dbReference type="EMBL" id="MG182145">
    <property type="protein sequence ID" value="AUM60065.1"/>
    <property type="molecule type" value="Genomic_DNA"/>
</dbReference>
<dbReference type="SMR" id="A0A2I6PJ08"/>
<dbReference type="GO" id="GO:0016020">
    <property type="term" value="C:membrane"/>
    <property type="evidence" value="ECO:0007669"/>
    <property type="project" value="UniProtKB-SubCell"/>
</dbReference>
<dbReference type="GO" id="GO:0020037">
    <property type="term" value="F:heme binding"/>
    <property type="evidence" value="ECO:0007669"/>
    <property type="project" value="InterPro"/>
</dbReference>
<dbReference type="GO" id="GO:0005506">
    <property type="term" value="F:iron ion binding"/>
    <property type="evidence" value="ECO:0007669"/>
    <property type="project" value="InterPro"/>
</dbReference>
<dbReference type="GO" id="GO:0004497">
    <property type="term" value="F:monooxygenase activity"/>
    <property type="evidence" value="ECO:0007669"/>
    <property type="project" value="UniProtKB-KW"/>
</dbReference>
<dbReference type="GO" id="GO:0016705">
    <property type="term" value="F:oxidoreductase activity, acting on paired donors, with incorporation or reduction of molecular oxygen"/>
    <property type="evidence" value="ECO:0007669"/>
    <property type="project" value="InterPro"/>
</dbReference>
<dbReference type="CDD" id="cd11061">
    <property type="entry name" value="CYP67-like"/>
    <property type="match status" value="1"/>
</dbReference>
<dbReference type="Gene3D" id="1.10.630.10">
    <property type="entry name" value="Cytochrome P450"/>
    <property type="match status" value="1"/>
</dbReference>
<dbReference type="InterPro" id="IPR001128">
    <property type="entry name" value="Cyt_P450"/>
</dbReference>
<dbReference type="InterPro" id="IPR002403">
    <property type="entry name" value="Cyt_P450_E_grp-IV"/>
</dbReference>
<dbReference type="InterPro" id="IPR036396">
    <property type="entry name" value="Cyt_P450_sf"/>
</dbReference>
<dbReference type="InterPro" id="IPR050121">
    <property type="entry name" value="Cytochrome_P450_monoxygenase"/>
</dbReference>
<dbReference type="PANTHER" id="PTHR24305">
    <property type="entry name" value="CYTOCHROME P450"/>
    <property type="match status" value="1"/>
</dbReference>
<dbReference type="PANTHER" id="PTHR24305:SF187">
    <property type="entry name" value="P450, PUTATIVE (EUROFUNG)-RELATED"/>
    <property type="match status" value="1"/>
</dbReference>
<dbReference type="Pfam" id="PF00067">
    <property type="entry name" value="p450"/>
    <property type="match status" value="1"/>
</dbReference>
<dbReference type="PRINTS" id="PR00465">
    <property type="entry name" value="EP450IV"/>
</dbReference>
<dbReference type="PRINTS" id="PR00385">
    <property type="entry name" value="P450"/>
</dbReference>
<dbReference type="SUPFAM" id="SSF48264">
    <property type="entry name" value="Cytochrome P450"/>
    <property type="match status" value="1"/>
</dbReference>
<reference key="1">
    <citation type="journal article" date="2018" name="J. Am. Chem. Soc.">
        <title>Heterologous biosynthesis of nodulisporic acid F.</title>
        <authorList>
            <person name="Van de Bittner K.C."/>
            <person name="Nicholson M.J."/>
            <person name="Bustamante L.Y."/>
            <person name="Kessans S.A."/>
            <person name="Ram A."/>
            <person name="van Dolleweerd C.J."/>
            <person name="Scott B."/>
            <person name="Parker E.J."/>
        </authorList>
    </citation>
    <scope>NUCLEOTIDE SEQUENCE [GENOMIC DNA]</scope>
    <scope>IDENTIFICATION</scope>
    <scope>FUNCTION</scope>
    <scope>PATHWAY</scope>
    <source>
        <strain>MF5954 / ATCC 74245</strain>
    </source>
</reference>
<proteinExistence type="inferred from homology"/>
<accession>A0A2I6PJ08</accession>
<protein>
    <recommendedName>
        <fullName evidence="4">Cytochrome P450 monooxygenase nodW</fullName>
        <ecNumber evidence="6">1.-.-.-</ecNumber>
    </recommendedName>
    <alternativeName>
        <fullName evidence="4">Nodulisporic acid biosynthesis cluster protein W</fullName>
    </alternativeName>
</protein>
<keyword id="KW-0349">Heme</keyword>
<keyword id="KW-0408">Iron</keyword>
<keyword id="KW-0472">Membrane</keyword>
<keyword id="KW-0479">Metal-binding</keyword>
<keyword id="KW-0503">Monooxygenase</keyword>
<keyword id="KW-0560">Oxidoreductase</keyword>
<keyword id="KW-0812">Transmembrane</keyword>
<keyword id="KW-1133">Transmembrane helix</keyword>
<sequence>MTLAILGISCLAAVLSHTILFIRGEWDKHAPVLFHCFITCPIALICSLLAVGLYGITFMFIQVWLCYISSICLSIIIYRLFLHPLRDFPGKVSARLSTLRWMKTAAVDRKWHLEVQNMHSVYGDFVRIRPREISVNNFNAIRDLAKCARGPFYDVNYPHKSLQMTRDRNFHLRRKKIWQKAFSPNAMLAHEGHVRQCCQELMGYLSSRGGQPVEVTELMQRVTFESMGWLVFGKAFNMIQKGLSHPGFTQLRSVKQLGGLLLWAPWTLILLRNLPFLRSKATSWLQWCSQEVVERKQNPTMTHDLFSHLLDDESKDTDDLVYDSELAVVAGSDSTASTLTAILFLLATHPDKQAILQKEVDDMNIGGLPMPTSTLVNMPYLNSCINEALRLYPAVMSGSQRETGPGGVILDGQFIPEHMLVSMPTYTIHRDKRNFVRPDEFIPERWTSQSHLTLNPDAFIPFSVGVYGCLGKPFAMMEMRMVISSIMSRFNLRLLPGRPMSHEASAPAYDCYIIHIPAFSLVFEPRAGNIWA</sequence>
<feature type="chain" id="PRO_0000446580" description="Cytochrome P450 monooxygenase nodW">
    <location>
        <begin position="1"/>
        <end position="532"/>
    </location>
</feature>
<feature type="transmembrane region" description="Helical" evidence="2">
    <location>
        <begin position="2"/>
        <end position="21"/>
    </location>
</feature>
<feature type="transmembrane region" description="Helical" evidence="2">
    <location>
        <begin position="31"/>
        <end position="53"/>
    </location>
</feature>
<feature type="transmembrane region" description="Helical" evidence="2">
    <location>
        <begin position="60"/>
        <end position="82"/>
    </location>
</feature>
<feature type="binding site" description="axial binding residue" evidence="1">
    <location>
        <position position="469"/>
    </location>
    <ligand>
        <name>heme</name>
        <dbReference type="ChEBI" id="CHEBI:30413"/>
    </ligand>
    <ligandPart>
        <name>Fe</name>
        <dbReference type="ChEBI" id="CHEBI:18248"/>
    </ligandPart>
</feature>
<name>NODW_HYPPI</name>